<dbReference type="EMBL" id="AF284338">
    <property type="protein sequence ID" value="AAG14459.1"/>
    <property type="molecule type" value="Genomic_DNA"/>
</dbReference>
<dbReference type="RefSeq" id="NP_076441.1">
    <property type="nucleotide sequence ID" value="NM_023951.1"/>
</dbReference>
<dbReference type="SMR" id="Q9ERS8"/>
<dbReference type="FunCoup" id="Q9ERS8">
    <property type="interactions" value="94"/>
</dbReference>
<dbReference type="STRING" id="10116.ENSRNOP00000013296"/>
<dbReference type="GlyGen" id="Q9ERS8">
    <property type="glycosylation" value="1 site"/>
</dbReference>
<dbReference type="PaxDb" id="10116-ENSRNOP00000013296"/>
<dbReference type="GeneID" id="58922"/>
<dbReference type="KEGG" id="rno:58922"/>
<dbReference type="AGR" id="RGD:62077"/>
<dbReference type="CTD" id="645832"/>
<dbReference type="RGD" id="62077">
    <property type="gene designation" value="Sebox"/>
</dbReference>
<dbReference type="eggNOG" id="KOG0490">
    <property type="taxonomic scope" value="Eukaryota"/>
</dbReference>
<dbReference type="InParanoid" id="Q9ERS8"/>
<dbReference type="OrthoDB" id="6159439at2759"/>
<dbReference type="PhylomeDB" id="Q9ERS8"/>
<dbReference type="PRO" id="PR:Q9ERS8"/>
<dbReference type="Proteomes" id="UP000002494">
    <property type="component" value="Unplaced"/>
</dbReference>
<dbReference type="GO" id="GO:0005634">
    <property type="term" value="C:nucleus"/>
    <property type="evidence" value="ECO:0007669"/>
    <property type="project" value="UniProtKB-SubCell"/>
</dbReference>
<dbReference type="GO" id="GO:0003677">
    <property type="term" value="F:DNA binding"/>
    <property type="evidence" value="ECO:0007669"/>
    <property type="project" value="UniProtKB-KW"/>
</dbReference>
<dbReference type="GO" id="GO:0009792">
    <property type="term" value="P:embryo development ending in birth or egg hatching"/>
    <property type="evidence" value="ECO:0000266"/>
    <property type="project" value="RGD"/>
</dbReference>
<dbReference type="GO" id="GO:0048477">
    <property type="term" value="P:oogenesis"/>
    <property type="evidence" value="ECO:0000266"/>
    <property type="project" value="RGD"/>
</dbReference>
<dbReference type="CDD" id="cd00086">
    <property type="entry name" value="homeodomain"/>
    <property type="match status" value="1"/>
</dbReference>
<dbReference type="FunFam" id="1.10.10.60:FF:000312">
    <property type="entry name" value="Mix-type homeobox gene 1"/>
    <property type="match status" value="1"/>
</dbReference>
<dbReference type="Gene3D" id="1.10.10.60">
    <property type="entry name" value="Homeodomain-like"/>
    <property type="match status" value="1"/>
</dbReference>
<dbReference type="InterPro" id="IPR001356">
    <property type="entry name" value="HD"/>
</dbReference>
<dbReference type="InterPro" id="IPR009057">
    <property type="entry name" value="Homeodomain-like_sf"/>
</dbReference>
<dbReference type="InterPro" id="IPR042223">
    <property type="entry name" value="SEBOX"/>
</dbReference>
<dbReference type="PANTHER" id="PTHR47777">
    <property type="entry name" value="HOMEOBOX PROTEIN SEBOX"/>
    <property type="match status" value="1"/>
</dbReference>
<dbReference type="PANTHER" id="PTHR47777:SF1">
    <property type="entry name" value="HOMEOBOX PROTEIN SEBOX"/>
    <property type="match status" value="1"/>
</dbReference>
<dbReference type="Pfam" id="PF00046">
    <property type="entry name" value="Homeodomain"/>
    <property type="match status" value="1"/>
</dbReference>
<dbReference type="SMART" id="SM00389">
    <property type="entry name" value="HOX"/>
    <property type="match status" value="1"/>
</dbReference>
<dbReference type="SUPFAM" id="SSF46689">
    <property type="entry name" value="Homeodomain-like"/>
    <property type="match status" value="1"/>
</dbReference>
<dbReference type="PROSITE" id="PS00027">
    <property type="entry name" value="HOMEOBOX_1"/>
    <property type="match status" value="1"/>
</dbReference>
<dbReference type="PROSITE" id="PS50071">
    <property type="entry name" value="HOMEOBOX_2"/>
    <property type="match status" value="1"/>
</dbReference>
<feature type="chain" id="PRO_0000311338" description="Homeobox protein SEBOX">
    <location>
        <begin position="1"/>
        <end position="188"/>
    </location>
</feature>
<feature type="DNA-binding region" description="Homeobox" evidence="2">
    <location>
        <begin position="18"/>
        <end position="77"/>
    </location>
</feature>
<feature type="region of interest" description="Disordered" evidence="3">
    <location>
        <begin position="80"/>
        <end position="125"/>
    </location>
</feature>
<feature type="compositionally biased region" description="Polar residues" evidence="3">
    <location>
        <begin position="111"/>
        <end position="125"/>
    </location>
</feature>
<gene>
    <name type="primary">Sebox</name>
    <name type="synonym">Og9x</name>
</gene>
<keyword id="KW-0217">Developmental protein</keyword>
<keyword id="KW-0221">Differentiation</keyword>
<keyword id="KW-0238">DNA-binding</keyword>
<keyword id="KW-0371">Homeobox</keyword>
<keyword id="KW-0539">Nucleus</keyword>
<keyword id="KW-1185">Reference proteome</keyword>
<keyword id="KW-0804">Transcription</keyword>
<keyword id="KW-0805">Transcription regulation</keyword>
<evidence type="ECO:0000250" key="1"/>
<evidence type="ECO:0000255" key="2">
    <source>
        <dbReference type="PROSITE-ProRule" id="PRU00108"/>
    </source>
</evidence>
<evidence type="ECO:0000256" key="3">
    <source>
        <dbReference type="SAM" id="MobiDB-lite"/>
    </source>
</evidence>
<evidence type="ECO:0000305" key="4"/>
<accession>Q9ERS8</accession>
<organism>
    <name type="scientific">Rattus norvegicus</name>
    <name type="common">Rat</name>
    <dbReference type="NCBI Taxonomy" id="10116"/>
    <lineage>
        <taxon>Eukaryota</taxon>
        <taxon>Metazoa</taxon>
        <taxon>Chordata</taxon>
        <taxon>Craniata</taxon>
        <taxon>Vertebrata</taxon>
        <taxon>Euteleostomi</taxon>
        <taxon>Mammalia</taxon>
        <taxon>Eutheria</taxon>
        <taxon>Euarchontoglires</taxon>
        <taxon>Glires</taxon>
        <taxon>Rodentia</taxon>
        <taxon>Myomorpha</taxon>
        <taxon>Muroidea</taxon>
        <taxon>Muridae</taxon>
        <taxon>Murinae</taxon>
        <taxon>Rattus</taxon>
    </lineage>
</organism>
<reference key="1">
    <citation type="journal article" date="2000" name="Proc. Natl. Acad. Sci. U.S.A.">
        <title>Mouse Sebox homeobox gene expression in skin, brain, oocytes, and two-cell embryos.</title>
        <authorList>
            <person name="Cinquanta M."/>
            <person name="Rovescalli A.C."/>
            <person name="Kozak C.A."/>
            <person name="Nirenberg M."/>
        </authorList>
    </citation>
    <scope>NUCLEOTIDE SEQUENCE [GENOMIC DNA]</scope>
    <source>
        <strain>Sprague-Dawley</strain>
    </source>
</reference>
<sequence length="188" mass="20196">MASPVEASPGCASGLGPHRRKRTTFSVGQLLELERVFAARPYPDISTREHLAQITHLPEAKIQVWFQNRRAKRIKDRKPGALNARLELPPNCSLPDTPQLSWDPGTPSHPLHSTSSAQQTSACPPQTSCLAPILGPGQSWSGAKAAAPWGTSEVSGVHSLEQIVPQTSLGNLSDLIYTSAIVTNVDHS</sequence>
<protein>
    <recommendedName>
        <fullName>Homeobox protein SEBOX</fullName>
    </recommendedName>
    <alternativeName>
        <fullName>Homeobox OG-9</fullName>
    </alternativeName>
    <alternativeName>
        <fullName>Skin-, embryo-, brain- and oocyte-specific homeobox</fullName>
    </alternativeName>
</protein>
<proteinExistence type="inferred from homology"/>
<name>SEBOX_RAT</name>
<comment type="function">
    <text evidence="1">Probable transcription factor involved in the control of specification of mesoderm and endoderm.</text>
</comment>
<comment type="subcellular location">
    <subcellularLocation>
        <location evidence="2">Nucleus</location>
    </subcellularLocation>
</comment>
<comment type="similarity">
    <text evidence="4">Belongs to the paired homeobox family.</text>
</comment>